<proteinExistence type="inferred from homology"/>
<name>RL11_SALNS</name>
<keyword id="KW-0488">Methylation</keyword>
<keyword id="KW-0687">Ribonucleoprotein</keyword>
<keyword id="KW-0689">Ribosomal protein</keyword>
<keyword id="KW-0694">RNA-binding</keyword>
<keyword id="KW-0699">rRNA-binding</keyword>
<reference key="1">
    <citation type="journal article" date="2011" name="J. Bacteriol.">
        <title>Comparative genomics of 28 Salmonella enterica isolates: evidence for CRISPR-mediated adaptive sublineage evolution.</title>
        <authorList>
            <person name="Fricke W.F."/>
            <person name="Mammel M.K."/>
            <person name="McDermott P.F."/>
            <person name="Tartera C."/>
            <person name="White D.G."/>
            <person name="Leclerc J.E."/>
            <person name="Ravel J."/>
            <person name="Cebula T.A."/>
        </authorList>
    </citation>
    <scope>NUCLEOTIDE SEQUENCE [LARGE SCALE GENOMIC DNA]</scope>
    <source>
        <strain>SL254</strain>
    </source>
</reference>
<dbReference type="EMBL" id="CP001113">
    <property type="protein sequence ID" value="ACF62100.1"/>
    <property type="molecule type" value="Genomic_DNA"/>
</dbReference>
<dbReference type="RefSeq" id="WP_001085926.1">
    <property type="nucleotide sequence ID" value="NZ_CCMR01000001.1"/>
</dbReference>
<dbReference type="SMR" id="B4T0Y5"/>
<dbReference type="GeneID" id="93777911"/>
<dbReference type="KEGG" id="see:SNSL254_A4481"/>
<dbReference type="HOGENOM" id="CLU_074237_2_0_6"/>
<dbReference type="Proteomes" id="UP000008824">
    <property type="component" value="Chromosome"/>
</dbReference>
<dbReference type="GO" id="GO:0022625">
    <property type="term" value="C:cytosolic large ribosomal subunit"/>
    <property type="evidence" value="ECO:0007669"/>
    <property type="project" value="TreeGrafter"/>
</dbReference>
<dbReference type="GO" id="GO:0070180">
    <property type="term" value="F:large ribosomal subunit rRNA binding"/>
    <property type="evidence" value="ECO:0007669"/>
    <property type="project" value="UniProtKB-UniRule"/>
</dbReference>
<dbReference type="GO" id="GO:0003735">
    <property type="term" value="F:structural constituent of ribosome"/>
    <property type="evidence" value="ECO:0007669"/>
    <property type="project" value="InterPro"/>
</dbReference>
<dbReference type="GO" id="GO:0006412">
    <property type="term" value="P:translation"/>
    <property type="evidence" value="ECO:0007669"/>
    <property type="project" value="UniProtKB-UniRule"/>
</dbReference>
<dbReference type="CDD" id="cd00349">
    <property type="entry name" value="Ribosomal_L11"/>
    <property type="match status" value="1"/>
</dbReference>
<dbReference type="FunFam" id="1.10.10.250:FF:000001">
    <property type="entry name" value="50S ribosomal protein L11"/>
    <property type="match status" value="1"/>
</dbReference>
<dbReference type="FunFam" id="3.30.1550.10:FF:000001">
    <property type="entry name" value="50S ribosomal protein L11"/>
    <property type="match status" value="1"/>
</dbReference>
<dbReference type="Gene3D" id="1.10.10.250">
    <property type="entry name" value="Ribosomal protein L11, C-terminal domain"/>
    <property type="match status" value="1"/>
</dbReference>
<dbReference type="Gene3D" id="3.30.1550.10">
    <property type="entry name" value="Ribosomal protein L11/L12, N-terminal domain"/>
    <property type="match status" value="1"/>
</dbReference>
<dbReference type="HAMAP" id="MF_00736">
    <property type="entry name" value="Ribosomal_uL11"/>
    <property type="match status" value="1"/>
</dbReference>
<dbReference type="InterPro" id="IPR000911">
    <property type="entry name" value="Ribosomal_uL11"/>
</dbReference>
<dbReference type="InterPro" id="IPR006519">
    <property type="entry name" value="Ribosomal_uL11_bac-typ"/>
</dbReference>
<dbReference type="InterPro" id="IPR020783">
    <property type="entry name" value="Ribosomal_uL11_C"/>
</dbReference>
<dbReference type="InterPro" id="IPR036769">
    <property type="entry name" value="Ribosomal_uL11_C_sf"/>
</dbReference>
<dbReference type="InterPro" id="IPR020785">
    <property type="entry name" value="Ribosomal_uL11_CS"/>
</dbReference>
<dbReference type="InterPro" id="IPR020784">
    <property type="entry name" value="Ribosomal_uL11_N"/>
</dbReference>
<dbReference type="InterPro" id="IPR036796">
    <property type="entry name" value="Ribosomal_uL11_N_sf"/>
</dbReference>
<dbReference type="NCBIfam" id="TIGR01632">
    <property type="entry name" value="L11_bact"/>
    <property type="match status" value="1"/>
</dbReference>
<dbReference type="PANTHER" id="PTHR11661">
    <property type="entry name" value="60S RIBOSOMAL PROTEIN L12"/>
    <property type="match status" value="1"/>
</dbReference>
<dbReference type="PANTHER" id="PTHR11661:SF1">
    <property type="entry name" value="LARGE RIBOSOMAL SUBUNIT PROTEIN UL11M"/>
    <property type="match status" value="1"/>
</dbReference>
<dbReference type="Pfam" id="PF00298">
    <property type="entry name" value="Ribosomal_L11"/>
    <property type="match status" value="1"/>
</dbReference>
<dbReference type="Pfam" id="PF03946">
    <property type="entry name" value="Ribosomal_L11_N"/>
    <property type="match status" value="1"/>
</dbReference>
<dbReference type="SMART" id="SM00649">
    <property type="entry name" value="RL11"/>
    <property type="match status" value="1"/>
</dbReference>
<dbReference type="SUPFAM" id="SSF54747">
    <property type="entry name" value="Ribosomal L11/L12e N-terminal domain"/>
    <property type="match status" value="1"/>
</dbReference>
<dbReference type="SUPFAM" id="SSF46906">
    <property type="entry name" value="Ribosomal protein L11, C-terminal domain"/>
    <property type="match status" value="1"/>
</dbReference>
<dbReference type="PROSITE" id="PS00359">
    <property type="entry name" value="RIBOSOMAL_L11"/>
    <property type="match status" value="1"/>
</dbReference>
<comment type="function">
    <text evidence="1">Forms part of the ribosomal stalk which helps the ribosome interact with GTP-bound translation factors.</text>
</comment>
<comment type="subunit">
    <text evidence="1">Part of the ribosomal stalk of the 50S ribosomal subunit. Interacts with L10 and the large rRNA to form the base of the stalk. L10 forms an elongated spine to which L12 dimers bind in a sequential fashion forming a multimeric L10(L12)X complex.</text>
</comment>
<comment type="PTM">
    <text evidence="1">One or more lysine residues are methylated.</text>
</comment>
<comment type="similarity">
    <text evidence="1">Belongs to the universal ribosomal protein uL11 family.</text>
</comment>
<protein>
    <recommendedName>
        <fullName evidence="1">Large ribosomal subunit protein uL11</fullName>
    </recommendedName>
    <alternativeName>
        <fullName evidence="2">50S ribosomal protein L11</fullName>
    </alternativeName>
</protein>
<gene>
    <name evidence="1" type="primary">rplK</name>
    <name type="ordered locus">SNSL254_A4481</name>
</gene>
<evidence type="ECO:0000255" key="1">
    <source>
        <dbReference type="HAMAP-Rule" id="MF_00736"/>
    </source>
</evidence>
<evidence type="ECO:0000305" key="2"/>
<organism>
    <name type="scientific">Salmonella newport (strain SL254)</name>
    <dbReference type="NCBI Taxonomy" id="423368"/>
    <lineage>
        <taxon>Bacteria</taxon>
        <taxon>Pseudomonadati</taxon>
        <taxon>Pseudomonadota</taxon>
        <taxon>Gammaproteobacteria</taxon>
        <taxon>Enterobacterales</taxon>
        <taxon>Enterobacteriaceae</taxon>
        <taxon>Salmonella</taxon>
    </lineage>
</organism>
<sequence>MAKKVQAYVKLQVAAGMANPSPPVGPALGQQGVNIMEFCKAFNAKTDSIEKGLPIPVVITVYADRSFTFVTKTPPAAVLLKKAAGIKSGSGKPNKDKVGKISRAQLQEIAQTKAADMTGADIEAMTRSIEGTARSMGLVVED</sequence>
<accession>B4T0Y5</accession>
<feature type="chain" id="PRO_1000195709" description="Large ribosomal subunit protein uL11">
    <location>
        <begin position="1"/>
        <end position="142"/>
    </location>
</feature>